<gene>
    <name evidence="1" type="primary">rpoY</name>
    <name type="ordered locus">spyM18_1940</name>
</gene>
<evidence type="ECO:0000255" key="1">
    <source>
        <dbReference type="HAMAP-Rule" id="MF_01553"/>
    </source>
</evidence>
<accession>Q7CMT4</accession>
<sequence length="76" mass="9146">MIYKVFYQETKDQSPRRESTKALYLNIDATDELDGRIKARRLVEDNTYYNVEFIELLSDKHLDYEKETGVFELTEF</sequence>
<reference key="1">
    <citation type="journal article" date="2002" name="Proc. Natl. Acad. Sci. U.S.A.">
        <title>Genome sequence and comparative microarray analysis of serotype M18 group A Streptococcus strains associated with acute rheumatic fever outbreaks.</title>
        <authorList>
            <person name="Smoot J.C."/>
            <person name="Barbian K.D."/>
            <person name="Van Gompel J.J."/>
            <person name="Smoot L.M."/>
            <person name="Chaussee M.S."/>
            <person name="Sylva G.L."/>
            <person name="Sturdevant D.E."/>
            <person name="Ricklefs S.M."/>
            <person name="Porcella S.F."/>
            <person name="Parkins L.D."/>
            <person name="Beres S.B."/>
            <person name="Campbell D.S."/>
            <person name="Smith T.M."/>
            <person name="Zhang Q."/>
            <person name="Kapur V."/>
            <person name="Daly J.A."/>
            <person name="Veasy L.G."/>
            <person name="Musser J.M."/>
        </authorList>
    </citation>
    <scope>NUCLEOTIDE SEQUENCE [LARGE SCALE GENOMIC DNA]</scope>
    <source>
        <strain>MGAS8232</strain>
    </source>
</reference>
<feature type="chain" id="PRO_0000163150" description="DNA-directed RNA polymerase subunit epsilon">
    <location>
        <begin position="1"/>
        <end position="76"/>
    </location>
</feature>
<proteinExistence type="inferred from homology"/>
<protein>
    <recommendedName>
        <fullName evidence="1">DNA-directed RNA polymerase subunit epsilon</fullName>
        <shortName evidence="1">RNAP epsilon subunit</shortName>
        <ecNumber evidence="1">2.7.7.6</ecNumber>
    </recommendedName>
    <alternativeName>
        <fullName evidence="1">RNA polymerase epsilon subunit</fullName>
    </alternativeName>
    <alternativeName>
        <fullName evidence="1">Transcriptase subunit epsilon</fullName>
    </alternativeName>
</protein>
<comment type="function">
    <text evidence="1">A non-essential component of RNA polymerase (RNAP).</text>
</comment>
<comment type="catalytic activity">
    <reaction evidence="1">
        <text>RNA(n) + a ribonucleoside 5'-triphosphate = RNA(n+1) + diphosphate</text>
        <dbReference type="Rhea" id="RHEA:21248"/>
        <dbReference type="Rhea" id="RHEA-COMP:14527"/>
        <dbReference type="Rhea" id="RHEA-COMP:17342"/>
        <dbReference type="ChEBI" id="CHEBI:33019"/>
        <dbReference type="ChEBI" id="CHEBI:61557"/>
        <dbReference type="ChEBI" id="CHEBI:140395"/>
        <dbReference type="EC" id="2.7.7.6"/>
    </reaction>
</comment>
<comment type="subunit">
    <text evidence="1">RNAP is composed of a core of 2 alpha, a beta and a beta' subunit. The core is associated with a delta subunit, and at least one of epsilon or omega. When a sigma factor is associated with the core the holoenzyme is formed, which can initiate transcription.</text>
</comment>
<comment type="similarity">
    <text evidence="1">Belongs to the RNA polymerase subunit epsilon family.</text>
</comment>
<organism>
    <name type="scientific">Streptococcus pyogenes serotype M18 (strain MGAS8232)</name>
    <dbReference type="NCBI Taxonomy" id="186103"/>
    <lineage>
        <taxon>Bacteria</taxon>
        <taxon>Bacillati</taxon>
        <taxon>Bacillota</taxon>
        <taxon>Bacilli</taxon>
        <taxon>Lactobacillales</taxon>
        <taxon>Streptococcaceae</taxon>
        <taxon>Streptococcus</taxon>
    </lineage>
</organism>
<name>RPOY_STRP8</name>
<dbReference type="EC" id="2.7.7.6" evidence="1"/>
<dbReference type="EMBL" id="AE009949">
    <property type="protein sequence ID" value="AAL98437.1"/>
    <property type="molecule type" value="Genomic_DNA"/>
</dbReference>
<dbReference type="RefSeq" id="WP_002982907.1">
    <property type="nucleotide sequence ID" value="NC_003485.1"/>
</dbReference>
<dbReference type="SMR" id="Q7CMT4"/>
<dbReference type="KEGG" id="spm:spyM18_1940"/>
<dbReference type="HOGENOM" id="CLU_187518_0_0_9"/>
<dbReference type="GO" id="GO:0000428">
    <property type="term" value="C:DNA-directed RNA polymerase complex"/>
    <property type="evidence" value="ECO:0007669"/>
    <property type="project" value="UniProtKB-KW"/>
</dbReference>
<dbReference type="GO" id="GO:0003677">
    <property type="term" value="F:DNA binding"/>
    <property type="evidence" value="ECO:0007669"/>
    <property type="project" value="UniProtKB-UniRule"/>
</dbReference>
<dbReference type="GO" id="GO:0003899">
    <property type="term" value="F:DNA-directed RNA polymerase activity"/>
    <property type="evidence" value="ECO:0007669"/>
    <property type="project" value="UniProtKB-UniRule"/>
</dbReference>
<dbReference type="GO" id="GO:0006351">
    <property type="term" value="P:DNA-templated transcription"/>
    <property type="evidence" value="ECO:0007669"/>
    <property type="project" value="UniProtKB-UniRule"/>
</dbReference>
<dbReference type="Gene3D" id="3.10.20.730">
    <property type="entry name" value="RNAP, epsilon subunit-like"/>
    <property type="match status" value="1"/>
</dbReference>
<dbReference type="HAMAP" id="MF_01553">
    <property type="entry name" value="RNApol_bact_RpoY"/>
    <property type="match status" value="1"/>
</dbReference>
<dbReference type="InterPro" id="IPR009907">
    <property type="entry name" value="RpoY"/>
</dbReference>
<dbReference type="NCBIfam" id="NF010188">
    <property type="entry name" value="PRK13667.1"/>
    <property type="match status" value="1"/>
</dbReference>
<dbReference type="Pfam" id="PF07288">
    <property type="entry name" value="RpoY"/>
    <property type="match status" value="1"/>
</dbReference>
<keyword id="KW-0240">DNA-directed RNA polymerase</keyword>
<keyword id="KW-0548">Nucleotidyltransferase</keyword>
<keyword id="KW-0804">Transcription</keyword>
<keyword id="KW-0808">Transferase</keyword>